<organism>
    <name type="scientific">Mus musculus</name>
    <name type="common">Mouse</name>
    <dbReference type="NCBI Taxonomy" id="10090"/>
    <lineage>
        <taxon>Eukaryota</taxon>
        <taxon>Metazoa</taxon>
        <taxon>Chordata</taxon>
        <taxon>Craniata</taxon>
        <taxon>Vertebrata</taxon>
        <taxon>Euteleostomi</taxon>
        <taxon>Mammalia</taxon>
        <taxon>Eutheria</taxon>
        <taxon>Euarchontoglires</taxon>
        <taxon>Glires</taxon>
        <taxon>Rodentia</taxon>
        <taxon>Myomorpha</taxon>
        <taxon>Muroidea</taxon>
        <taxon>Muridae</taxon>
        <taxon>Murinae</taxon>
        <taxon>Mus</taxon>
        <taxon>Mus</taxon>
    </lineage>
</organism>
<name>ISK8_MOUSE</name>
<keyword id="KW-1015">Disulfide bond</keyword>
<keyword id="KW-0646">Protease inhibitor</keyword>
<keyword id="KW-1185">Reference proteome</keyword>
<keyword id="KW-0677">Repeat</keyword>
<keyword id="KW-0964">Secreted</keyword>
<keyword id="KW-0722">Serine protease inhibitor</keyword>
<keyword id="KW-0732">Signal</keyword>
<sequence>MKVIFSVAVLVLASSVWTSLAVDFILPMNFHMTGELLQKTKALCIKNIQLCWILSYFKVSEPICGSNQVTYEGECHLCSGILYEDRTVIKVHDGPCEHSSDESEH</sequence>
<protein>
    <recommendedName>
        <fullName>Serine protease inhibitor Kazal-type 8</fullName>
    </recommendedName>
</protein>
<feature type="signal peptide" evidence="1">
    <location>
        <begin position="1"/>
        <end position="21"/>
    </location>
</feature>
<feature type="chain" id="PRO_0000302140" description="Serine protease inhibitor Kazal-type 8">
    <location>
        <begin position="22"/>
        <end position="105"/>
    </location>
</feature>
<feature type="domain" description="Kazal-like" evidence="2">
    <location>
        <begin position="44"/>
        <end position="98"/>
    </location>
</feature>
<feature type="site" description="Reactive bond" evidence="2">
    <location>
        <begin position="53"/>
        <end position="54"/>
    </location>
</feature>
<feature type="disulfide bond" evidence="2">
    <location>
        <begin position="44"/>
        <end position="78"/>
    </location>
</feature>
<feature type="disulfide bond" evidence="2">
    <location>
        <begin position="51"/>
        <end position="75"/>
    </location>
</feature>
<feature type="disulfide bond" evidence="2">
    <location>
        <begin position="64"/>
        <end position="96"/>
    </location>
</feature>
<comment type="function">
    <text>Probable serine protease inhibitor.</text>
</comment>
<comment type="subcellular location">
    <subcellularLocation>
        <location evidence="4">Secreted</location>
    </subcellularLocation>
</comment>
<comment type="tissue specificity">
    <text evidence="3">Expressed in epydiymis, in the cauda, corpus and caput.</text>
</comment>
<dbReference type="EMBL" id="DQ437329">
    <property type="protein sequence ID" value="ABD93324.1"/>
    <property type="molecule type" value="mRNA"/>
</dbReference>
<dbReference type="CCDS" id="CCDS40777.1"/>
<dbReference type="RefSeq" id="NP_898959.2">
    <property type="nucleotide sequence ID" value="NM_183136.2"/>
</dbReference>
<dbReference type="RefSeq" id="XP_006512461.1">
    <property type="nucleotide sequence ID" value="XM_006512398.5"/>
</dbReference>
<dbReference type="SMR" id="Q09TK9"/>
<dbReference type="STRING" id="10090.ENSMUSP00000142586"/>
<dbReference type="PaxDb" id="10090-ENSMUSP00000052529"/>
<dbReference type="ProteomicsDB" id="269338"/>
<dbReference type="Antibodypedia" id="56531">
    <property type="antibodies" value="59 antibodies from 14 providers"/>
</dbReference>
<dbReference type="DNASU" id="78709"/>
<dbReference type="Ensembl" id="ENSMUST00000198988.5">
    <property type="protein sequence ID" value="ENSMUSP00000142586.2"/>
    <property type="gene ID" value="ENSMUSG00000050074.13"/>
</dbReference>
<dbReference type="GeneID" id="78709"/>
<dbReference type="KEGG" id="mmu:78709"/>
<dbReference type="UCSC" id="uc009rsr.1">
    <property type="organism name" value="mouse"/>
</dbReference>
<dbReference type="AGR" id="MGI:1925959"/>
<dbReference type="CTD" id="646424"/>
<dbReference type="MGI" id="MGI:1925959">
    <property type="gene designation" value="Spink8"/>
</dbReference>
<dbReference type="VEuPathDB" id="HostDB:ENSMUSG00000050074"/>
<dbReference type="eggNOG" id="ENOG502TDVY">
    <property type="taxonomic scope" value="Eukaryota"/>
</dbReference>
<dbReference type="GeneTree" id="ENSGT00520000060726"/>
<dbReference type="InParanoid" id="Q09TK9"/>
<dbReference type="OMA" id="YDGPCEN"/>
<dbReference type="OrthoDB" id="126772at2759"/>
<dbReference type="PhylomeDB" id="Q09TK9"/>
<dbReference type="BioGRID-ORCS" id="78709">
    <property type="hits" value="4 hits in 77 CRISPR screens"/>
</dbReference>
<dbReference type="ChiTaRS" id="Spink8">
    <property type="organism name" value="mouse"/>
</dbReference>
<dbReference type="PRO" id="PR:Q09TK9"/>
<dbReference type="Proteomes" id="UP000000589">
    <property type="component" value="Chromosome 9"/>
</dbReference>
<dbReference type="RNAct" id="Q09TK9">
    <property type="molecule type" value="protein"/>
</dbReference>
<dbReference type="Bgee" id="ENSMUSG00000050074">
    <property type="expression patterns" value="Expressed in seminal vesicle and 60 other cell types or tissues"/>
</dbReference>
<dbReference type="ExpressionAtlas" id="Q09TK9">
    <property type="expression patterns" value="baseline and differential"/>
</dbReference>
<dbReference type="GO" id="GO:0005576">
    <property type="term" value="C:extracellular region"/>
    <property type="evidence" value="ECO:0007669"/>
    <property type="project" value="UniProtKB-SubCell"/>
</dbReference>
<dbReference type="GO" id="GO:0004867">
    <property type="term" value="F:serine-type endopeptidase inhibitor activity"/>
    <property type="evidence" value="ECO:0007669"/>
    <property type="project" value="UniProtKB-KW"/>
</dbReference>
<dbReference type="Gene3D" id="3.30.60.30">
    <property type="match status" value="1"/>
</dbReference>
<dbReference type="InterPro" id="IPR002350">
    <property type="entry name" value="Kazal_dom"/>
</dbReference>
<dbReference type="InterPro" id="IPR036058">
    <property type="entry name" value="Kazal_dom_sf"/>
</dbReference>
<dbReference type="PANTHER" id="PTHR21312">
    <property type="entry name" value="SERINE PROTEASE INHIBITOR"/>
    <property type="match status" value="1"/>
</dbReference>
<dbReference type="PANTHER" id="PTHR21312:SF37">
    <property type="entry name" value="SERINE PROTEASE INHIBITOR KAZAL-TYPE 8"/>
    <property type="match status" value="1"/>
</dbReference>
<dbReference type="Pfam" id="PF00050">
    <property type="entry name" value="Kazal_1"/>
    <property type="match status" value="1"/>
</dbReference>
<dbReference type="SMART" id="SM00280">
    <property type="entry name" value="KAZAL"/>
    <property type="match status" value="1"/>
</dbReference>
<dbReference type="SUPFAM" id="SSF100895">
    <property type="entry name" value="Kazal-type serine protease inhibitors"/>
    <property type="match status" value="1"/>
</dbReference>
<dbReference type="PROSITE" id="PS51465">
    <property type="entry name" value="KAZAL_2"/>
    <property type="match status" value="1"/>
</dbReference>
<gene>
    <name type="primary">Spink8</name>
</gene>
<accession>Q09TK9</accession>
<evidence type="ECO:0000255" key="1"/>
<evidence type="ECO:0000255" key="2">
    <source>
        <dbReference type="PROSITE-ProRule" id="PRU00798"/>
    </source>
</evidence>
<evidence type="ECO:0000269" key="3">
    <source>
    </source>
</evidence>
<evidence type="ECO:0000305" key="4"/>
<proteinExistence type="evidence at transcript level"/>
<reference key="1">
    <citation type="journal article" date="2006" name="Biochem. Biophys. Res. Commun.">
        <title>Novel epididymal protease inhibitors with Kazal or WAP family domain.</title>
        <authorList>
            <person name="Jalkanen J."/>
            <person name="Kotimaeki M."/>
            <person name="Huhtaniemi I."/>
            <person name="Poutanen M."/>
        </authorList>
    </citation>
    <scope>NUCLEOTIDE SEQUENCE [MRNA]</scope>
    <scope>TISSUE SPECIFICITY</scope>
    <source>
        <strain>FVB/N</strain>
        <tissue>Epididymis</tissue>
    </source>
</reference>